<protein>
    <recommendedName>
        <fullName evidence="1">Ribosome biogenesis protein YTM1</fullName>
    </recommendedName>
</protein>
<comment type="function">
    <text evidence="1">Component of the NOP7 complex, which is required for maturation of the 25S and 5.8S ribosomal RNAs and formation of the 60S ribosome.</text>
</comment>
<comment type="subunit">
    <text evidence="1">Component of the NOP7 complex, composed of ERB1, NOP7 and YTM1. The complex is held together by ERB1, which interacts with NOP7 via its N-terminal domain and with YTM1 via a high-affinity interaction between the seven-bladed beta-propeller domains of the 2 proteins. The NOP7 complex associates with the 66S pre-ribosome. Interacts (via UBL domain) with MDN1 (via VWFA/MIDAS domain).</text>
</comment>
<comment type="subcellular location">
    <subcellularLocation>
        <location evidence="1">Nucleus</location>
        <location evidence="1">Nucleolus</location>
    </subcellularLocation>
    <subcellularLocation>
        <location evidence="1">Nucleus</location>
        <location evidence="1">Nucleoplasm</location>
    </subcellularLocation>
</comment>
<comment type="similarity">
    <text evidence="1">Belongs to the WD repeat WDR12/YTM1 family.</text>
</comment>
<sequence>MAEESSLEVQSQTAQTQARLRFSTRDEDLALPESTGPILVPTGLRRYALSTLVNNLLATEKPVPLEFLINGTYLRTSVDEFLTANGISAETTLDVEYVRALIPPLHVASFLHDDWVSSVDVLSDSQNEERIISASYDGLLRVWNMSSEIIHTSASAKDGGHQSAIKCVRFLSASQIVSSGIDRTVRLWKYTDQEKGITPQIEYYGHKGSVDSIAVHGNRILSASADHTVGFWSTKKSESPAVPQNLLPSSSARSSKRRKLNSSASTSQRGPLALLKGHTAPVSAAIFDAKDSTVGYSTSWDHSLRTWDLVTAALVDTRTTSHSLLCAQHLPEHTLLAAGSAARHVTLIDPRASATTVSAMTLRGHTNAVVCLARDPDSTYGLISGSHDGTSRIWDIRSTKTDTDGVVSESIYTIARKSAGEGKRVGGDGVKVFDVCWDKKVGIVSVGEDKVIQINRGEGVVPKTA</sequence>
<organism>
    <name type="scientific">Coccidioides immitis (strain RS)</name>
    <name type="common">Valley fever fungus</name>
    <dbReference type="NCBI Taxonomy" id="246410"/>
    <lineage>
        <taxon>Eukaryota</taxon>
        <taxon>Fungi</taxon>
        <taxon>Dikarya</taxon>
        <taxon>Ascomycota</taxon>
        <taxon>Pezizomycotina</taxon>
        <taxon>Eurotiomycetes</taxon>
        <taxon>Eurotiomycetidae</taxon>
        <taxon>Onygenales</taxon>
        <taxon>Onygenaceae</taxon>
        <taxon>Coccidioides</taxon>
    </lineage>
</organism>
<keyword id="KW-0539">Nucleus</keyword>
<keyword id="KW-1185">Reference proteome</keyword>
<keyword id="KW-0677">Repeat</keyword>
<keyword id="KW-0690">Ribosome biogenesis</keyword>
<keyword id="KW-0698">rRNA processing</keyword>
<keyword id="KW-0853">WD repeat</keyword>
<evidence type="ECO:0000255" key="1">
    <source>
        <dbReference type="HAMAP-Rule" id="MF_03029"/>
    </source>
</evidence>
<evidence type="ECO:0000256" key="2">
    <source>
        <dbReference type="SAM" id="MobiDB-lite"/>
    </source>
</evidence>
<dbReference type="EMBL" id="GG704915">
    <property type="protein sequence ID" value="KJF61393.1"/>
    <property type="molecule type" value="Genomic_DNA"/>
</dbReference>
<dbReference type="RefSeq" id="XP_012213784.1">
    <property type="nucleotide sequence ID" value="XM_012358361.1"/>
</dbReference>
<dbReference type="SMR" id="Q1DJF7"/>
<dbReference type="FunCoup" id="Q1DJF7">
    <property type="interactions" value="865"/>
</dbReference>
<dbReference type="STRING" id="246410.Q1DJF7"/>
<dbReference type="GeneID" id="24164108"/>
<dbReference type="KEGG" id="cim:CIMG_12374"/>
<dbReference type="VEuPathDB" id="FungiDB:CIMG_12374"/>
<dbReference type="InParanoid" id="Q1DJF7"/>
<dbReference type="OMA" id="DHKYVEF"/>
<dbReference type="OrthoDB" id="10251381at2759"/>
<dbReference type="Proteomes" id="UP000001261">
    <property type="component" value="Unassembled WGS sequence"/>
</dbReference>
<dbReference type="GO" id="GO:0005654">
    <property type="term" value="C:nucleoplasm"/>
    <property type="evidence" value="ECO:0007669"/>
    <property type="project" value="UniProtKB-SubCell"/>
</dbReference>
<dbReference type="GO" id="GO:0070545">
    <property type="term" value="C:PeBoW complex"/>
    <property type="evidence" value="ECO:0007669"/>
    <property type="project" value="TreeGrafter"/>
</dbReference>
<dbReference type="GO" id="GO:0030687">
    <property type="term" value="C:preribosome, large subunit precursor"/>
    <property type="evidence" value="ECO:0007669"/>
    <property type="project" value="UniProtKB-UniRule"/>
</dbReference>
<dbReference type="GO" id="GO:0043021">
    <property type="term" value="F:ribonucleoprotein complex binding"/>
    <property type="evidence" value="ECO:0007669"/>
    <property type="project" value="UniProtKB-UniRule"/>
</dbReference>
<dbReference type="GO" id="GO:0000466">
    <property type="term" value="P:maturation of 5.8S rRNA from tricistronic rRNA transcript (SSU-rRNA, 5.8S rRNA, LSU-rRNA)"/>
    <property type="evidence" value="ECO:0007669"/>
    <property type="project" value="UniProtKB-UniRule"/>
</dbReference>
<dbReference type="GO" id="GO:0000463">
    <property type="term" value="P:maturation of LSU-rRNA from tricistronic rRNA transcript (SSU-rRNA, 5.8S rRNA, LSU-rRNA)"/>
    <property type="evidence" value="ECO:0007669"/>
    <property type="project" value="UniProtKB-UniRule"/>
</dbReference>
<dbReference type="CDD" id="cd00200">
    <property type="entry name" value="WD40"/>
    <property type="match status" value="1"/>
</dbReference>
<dbReference type="Gene3D" id="2.130.10.10">
    <property type="entry name" value="YVTN repeat-like/Quinoprotein amine dehydrogenase"/>
    <property type="match status" value="1"/>
</dbReference>
<dbReference type="HAMAP" id="MF_03029">
    <property type="entry name" value="WDR12"/>
    <property type="match status" value="1"/>
</dbReference>
<dbReference type="InterPro" id="IPR020472">
    <property type="entry name" value="G-protein_beta_WD-40_rep"/>
</dbReference>
<dbReference type="InterPro" id="IPR012972">
    <property type="entry name" value="NLE"/>
</dbReference>
<dbReference type="InterPro" id="IPR015943">
    <property type="entry name" value="WD40/YVTN_repeat-like_dom_sf"/>
</dbReference>
<dbReference type="InterPro" id="IPR019775">
    <property type="entry name" value="WD40_repeat_CS"/>
</dbReference>
<dbReference type="InterPro" id="IPR036322">
    <property type="entry name" value="WD40_repeat_dom_sf"/>
</dbReference>
<dbReference type="InterPro" id="IPR001680">
    <property type="entry name" value="WD40_rpt"/>
</dbReference>
<dbReference type="InterPro" id="IPR028599">
    <property type="entry name" value="WDR12/Ytm1"/>
</dbReference>
<dbReference type="PANTHER" id="PTHR19855:SF11">
    <property type="entry name" value="RIBOSOME BIOGENESIS PROTEIN WDR12"/>
    <property type="match status" value="1"/>
</dbReference>
<dbReference type="PANTHER" id="PTHR19855">
    <property type="entry name" value="WD40 REPEAT PROTEIN 12, 37"/>
    <property type="match status" value="1"/>
</dbReference>
<dbReference type="Pfam" id="PF08154">
    <property type="entry name" value="NLE"/>
    <property type="match status" value="1"/>
</dbReference>
<dbReference type="Pfam" id="PF00400">
    <property type="entry name" value="WD40"/>
    <property type="match status" value="5"/>
</dbReference>
<dbReference type="PRINTS" id="PR00320">
    <property type="entry name" value="GPROTEINBRPT"/>
</dbReference>
<dbReference type="SMART" id="SM00320">
    <property type="entry name" value="WD40"/>
    <property type="match status" value="7"/>
</dbReference>
<dbReference type="SUPFAM" id="SSF50978">
    <property type="entry name" value="WD40 repeat-like"/>
    <property type="match status" value="1"/>
</dbReference>
<dbReference type="PROSITE" id="PS00678">
    <property type="entry name" value="WD_REPEATS_1"/>
    <property type="match status" value="2"/>
</dbReference>
<dbReference type="PROSITE" id="PS50082">
    <property type="entry name" value="WD_REPEATS_2"/>
    <property type="match status" value="5"/>
</dbReference>
<dbReference type="PROSITE" id="PS50294">
    <property type="entry name" value="WD_REPEATS_REGION"/>
    <property type="match status" value="1"/>
</dbReference>
<gene>
    <name evidence="1" type="primary">YTM1</name>
    <name type="ORF">CIMG_12374</name>
</gene>
<reference key="1">
    <citation type="journal article" date="2009" name="Genome Res.">
        <title>Comparative genomic analyses of the human fungal pathogens Coccidioides and their relatives.</title>
        <authorList>
            <person name="Sharpton T.J."/>
            <person name="Stajich J.E."/>
            <person name="Rounsley S.D."/>
            <person name="Gardner M.J."/>
            <person name="Wortman J.R."/>
            <person name="Jordar V.S."/>
            <person name="Maiti R."/>
            <person name="Kodira C.D."/>
            <person name="Neafsey D.E."/>
            <person name="Zeng Q."/>
            <person name="Hung C.-Y."/>
            <person name="McMahan C."/>
            <person name="Muszewska A."/>
            <person name="Grynberg M."/>
            <person name="Mandel M.A."/>
            <person name="Kellner E.M."/>
            <person name="Barker B.M."/>
            <person name="Galgiani J.N."/>
            <person name="Orbach M.J."/>
            <person name="Kirkland T.N."/>
            <person name="Cole G.T."/>
            <person name="Henn M.R."/>
            <person name="Birren B.W."/>
            <person name="Taylor J.W."/>
        </authorList>
    </citation>
    <scope>NUCLEOTIDE SEQUENCE [LARGE SCALE GENOMIC DNA]</scope>
    <source>
        <strain>RS</strain>
    </source>
</reference>
<reference key="2">
    <citation type="journal article" date="2010" name="Genome Res.">
        <title>Population genomic sequencing of Coccidioides fungi reveals recent hybridization and transposon control.</title>
        <authorList>
            <person name="Neafsey D.E."/>
            <person name="Barker B.M."/>
            <person name="Sharpton T.J."/>
            <person name="Stajich J.E."/>
            <person name="Park D.J."/>
            <person name="Whiston E."/>
            <person name="Hung C.-Y."/>
            <person name="McMahan C."/>
            <person name="White J."/>
            <person name="Sykes S."/>
            <person name="Heiman D."/>
            <person name="Young S."/>
            <person name="Zeng Q."/>
            <person name="Abouelleil A."/>
            <person name="Aftuck L."/>
            <person name="Bessette D."/>
            <person name="Brown A."/>
            <person name="FitzGerald M."/>
            <person name="Lui A."/>
            <person name="Macdonald J.P."/>
            <person name="Priest M."/>
            <person name="Orbach M.J."/>
            <person name="Galgiani J.N."/>
            <person name="Kirkland T.N."/>
            <person name="Cole G.T."/>
            <person name="Birren B.W."/>
            <person name="Henn M.R."/>
            <person name="Taylor J.W."/>
            <person name="Rounsley S.D."/>
        </authorList>
    </citation>
    <scope>GENOME REANNOTATION</scope>
    <source>
        <strain>RS</strain>
    </source>
</reference>
<accession>Q1DJF7</accession>
<accession>A0A0D8JYQ5</accession>
<accession>J3K0D5</accession>
<feature type="chain" id="PRO_0000369584" description="Ribosome biogenesis protein YTM1">
    <location>
        <begin position="1"/>
        <end position="465"/>
    </location>
</feature>
<feature type="repeat" description="WD 1">
    <location>
        <begin position="111"/>
        <end position="153"/>
    </location>
</feature>
<feature type="repeat" description="WD 2">
    <location>
        <begin position="160"/>
        <end position="198"/>
    </location>
</feature>
<feature type="repeat" description="WD 3">
    <location>
        <begin position="205"/>
        <end position="242"/>
    </location>
</feature>
<feature type="repeat" description="WD 4">
    <location>
        <begin position="277"/>
        <end position="317"/>
    </location>
</feature>
<feature type="repeat" description="WD 5">
    <location>
        <begin position="319"/>
        <end position="358"/>
    </location>
</feature>
<feature type="repeat" description="WD 6">
    <location>
        <begin position="364"/>
        <end position="404"/>
    </location>
</feature>
<feature type="repeat" description="WD 7">
    <location>
        <begin position="427"/>
        <end position="465"/>
    </location>
</feature>
<feature type="region of interest" description="Ubiquitin-like (UBL) domain" evidence="1">
    <location>
        <begin position="18"/>
        <end position="99"/>
    </location>
</feature>
<feature type="region of interest" description="Disordered" evidence="2">
    <location>
        <begin position="235"/>
        <end position="272"/>
    </location>
</feature>
<proteinExistence type="inferred from homology"/>
<name>YTM1_COCIM</name>